<evidence type="ECO:0000255" key="1">
    <source>
        <dbReference type="HAMAP-Rule" id="MF_00815"/>
    </source>
</evidence>
<organism>
    <name type="scientific">Prochlorococcus marinus (strain MIT 9312)</name>
    <dbReference type="NCBI Taxonomy" id="74546"/>
    <lineage>
        <taxon>Bacteria</taxon>
        <taxon>Bacillati</taxon>
        <taxon>Cyanobacteriota</taxon>
        <taxon>Cyanophyceae</taxon>
        <taxon>Synechococcales</taxon>
        <taxon>Prochlorococcaceae</taxon>
        <taxon>Prochlorococcus</taxon>
    </lineage>
</organism>
<proteinExistence type="inferred from homology"/>
<gene>
    <name evidence="1" type="primary">atpG</name>
    <name evidence="1" type="synonym">atpC</name>
    <name type="ordered locus">PMT9312_1543</name>
</gene>
<name>ATPG_PROM9</name>
<reference key="1">
    <citation type="journal article" date="2006" name="Science">
        <title>Genomic islands and the ecology and evolution of Prochlorococcus.</title>
        <authorList>
            <person name="Coleman M.L."/>
            <person name="Sullivan M.B."/>
            <person name="Martiny A.C."/>
            <person name="Steglich C."/>
            <person name="Barry K."/>
            <person name="Delong E.F."/>
            <person name="Chisholm S.W."/>
        </authorList>
    </citation>
    <scope>NUCLEOTIDE SEQUENCE [LARGE SCALE GENOMIC DNA]</scope>
    <source>
        <strain>MIT 9312</strain>
    </source>
</reference>
<dbReference type="EMBL" id="CP000111">
    <property type="protein sequence ID" value="ABB50603.1"/>
    <property type="molecule type" value="Genomic_DNA"/>
</dbReference>
<dbReference type="RefSeq" id="WP_011377086.1">
    <property type="nucleotide sequence ID" value="NC_007577.1"/>
</dbReference>
<dbReference type="SMR" id="Q318U2"/>
<dbReference type="STRING" id="74546.PMT9312_1543"/>
<dbReference type="KEGG" id="pmi:PMT9312_1543"/>
<dbReference type="eggNOG" id="COG0224">
    <property type="taxonomic scope" value="Bacteria"/>
</dbReference>
<dbReference type="HOGENOM" id="CLU_050669_0_0_3"/>
<dbReference type="OrthoDB" id="9812769at2"/>
<dbReference type="Proteomes" id="UP000002715">
    <property type="component" value="Chromosome"/>
</dbReference>
<dbReference type="GO" id="GO:0031676">
    <property type="term" value="C:plasma membrane-derived thylakoid membrane"/>
    <property type="evidence" value="ECO:0007669"/>
    <property type="project" value="UniProtKB-SubCell"/>
</dbReference>
<dbReference type="GO" id="GO:0045259">
    <property type="term" value="C:proton-transporting ATP synthase complex"/>
    <property type="evidence" value="ECO:0007669"/>
    <property type="project" value="UniProtKB-KW"/>
</dbReference>
<dbReference type="GO" id="GO:0005524">
    <property type="term" value="F:ATP binding"/>
    <property type="evidence" value="ECO:0007669"/>
    <property type="project" value="UniProtKB-UniRule"/>
</dbReference>
<dbReference type="GO" id="GO:0046933">
    <property type="term" value="F:proton-transporting ATP synthase activity, rotational mechanism"/>
    <property type="evidence" value="ECO:0007669"/>
    <property type="project" value="UniProtKB-UniRule"/>
</dbReference>
<dbReference type="CDD" id="cd12151">
    <property type="entry name" value="F1-ATPase_gamma"/>
    <property type="match status" value="1"/>
</dbReference>
<dbReference type="FunFam" id="3.40.1380.10:FF:000006">
    <property type="entry name" value="ATP synthase gamma chain"/>
    <property type="match status" value="1"/>
</dbReference>
<dbReference type="FunFam" id="1.10.287.80:FF:000003">
    <property type="entry name" value="ATP synthase gamma chain, chloroplastic"/>
    <property type="match status" value="1"/>
</dbReference>
<dbReference type="Gene3D" id="3.40.1380.10">
    <property type="match status" value="1"/>
</dbReference>
<dbReference type="Gene3D" id="1.10.287.80">
    <property type="entry name" value="ATP synthase, gamma subunit, helix hairpin domain"/>
    <property type="match status" value="2"/>
</dbReference>
<dbReference type="HAMAP" id="MF_00815">
    <property type="entry name" value="ATP_synth_gamma_bact"/>
    <property type="match status" value="1"/>
</dbReference>
<dbReference type="InterPro" id="IPR035968">
    <property type="entry name" value="ATP_synth_F1_ATPase_gsu"/>
</dbReference>
<dbReference type="InterPro" id="IPR000131">
    <property type="entry name" value="ATP_synth_F1_gsu"/>
</dbReference>
<dbReference type="NCBIfam" id="TIGR01146">
    <property type="entry name" value="ATPsyn_F1gamma"/>
    <property type="match status" value="1"/>
</dbReference>
<dbReference type="NCBIfam" id="NF004145">
    <property type="entry name" value="PRK05621.1-2"/>
    <property type="match status" value="1"/>
</dbReference>
<dbReference type="PANTHER" id="PTHR11693">
    <property type="entry name" value="ATP SYNTHASE GAMMA CHAIN"/>
    <property type="match status" value="1"/>
</dbReference>
<dbReference type="PANTHER" id="PTHR11693:SF41">
    <property type="entry name" value="ATP SYNTHASE GAMMA CHAIN, CHLOROPLASTIC"/>
    <property type="match status" value="1"/>
</dbReference>
<dbReference type="Pfam" id="PF00231">
    <property type="entry name" value="ATP-synt"/>
    <property type="match status" value="1"/>
</dbReference>
<dbReference type="PRINTS" id="PR00126">
    <property type="entry name" value="ATPASEGAMMA"/>
</dbReference>
<dbReference type="SUPFAM" id="SSF52943">
    <property type="entry name" value="ATP synthase (F1-ATPase), gamma subunit"/>
    <property type="match status" value="1"/>
</dbReference>
<protein>
    <recommendedName>
        <fullName evidence="1">ATP synthase gamma chain</fullName>
    </recommendedName>
    <alternativeName>
        <fullName evidence="1">ATP synthase F1 sector gamma subunit</fullName>
    </alternativeName>
    <alternativeName>
        <fullName evidence="1">F-ATPase gamma subunit</fullName>
    </alternativeName>
</protein>
<accession>Q318U2</accession>
<comment type="function">
    <text evidence="1">Produces ATP from ADP in the presence of a proton gradient across the membrane. The gamma chain is believed to be important in regulating ATPase activity and the flow of protons through the CF(0) complex.</text>
</comment>
<comment type="subunit">
    <text evidence="1">F-type ATPases have 2 components, CF(1) - the catalytic core - and CF(0) - the membrane proton channel. CF(1) has five subunits: alpha(3), beta(3), gamma(1), delta(1), epsilon(1). CF(0) has three main subunits: a, b and c.</text>
</comment>
<comment type="subcellular location">
    <subcellularLocation>
        <location evidence="1">Cellular thylakoid membrane</location>
        <topology evidence="1">Peripheral membrane protein</topology>
    </subcellularLocation>
</comment>
<comment type="similarity">
    <text evidence="1">Belongs to the ATPase gamma chain family.</text>
</comment>
<sequence>MANLKEIRDRIVSVKNTRKITEAMRLVAAAKVRRAQDQVLKSRPFADKLARVLENIQSRVQFEAVDSPLLSKRDVKTISLVCITADRGLCGGYNTNIIKKVEIRYAELIKQGYEPNLILVGKKAIGYFQNRKDRYIIKTTFKELEQVPTAKDSEGITSEVLAEFLSENADRVEIIYTKFITLVSCAPVVQTLLPLDPQGIADENDEIFRLTTKDSKLLVEKSNIEKSDSEKLPSDIVFEQSPDQLLDSLLPLYLQNQVLRALQESAASELACRMTAMNNASDNAKELASTLNLTYNKARQAAITQEILEVVGGSAV</sequence>
<keyword id="KW-0066">ATP synthesis</keyword>
<keyword id="KW-0139">CF(1)</keyword>
<keyword id="KW-0375">Hydrogen ion transport</keyword>
<keyword id="KW-0406">Ion transport</keyword>
<keyword id="KW-0472">Membrane</keyword>
<keyword id="KW-0793">Thylakoid</keyword>
<keyword id="KW-0813">Transport</keyword>
<feature type="chain" id="PRO_1000053286" description="ATP synthase gamma chain">
    <location>
        <begin position="1"/>
        <end position="316"/>
    </location>
</feature>